<dbReference type="EMBL" id="D13784">
    <property type="status" value="NOT_ANNOTATED_CDS"/>
    <property type="molecule type" value="Genomic_DNA"/>
</dbReference>
<dbReference type="EMBL" id="AF033817">
    <property type="protein sequence ID" value="AAC82583.1"/>
    <property type="molecule type" value="Genomic_DNA"/>
</dbReference>
<dbReference type="PIR" id="E28136">
    <property type="entry name" value="TNLJCN"/>
</dbReference>
<dbReference type="RefSeq" id="NP_057864.1">
    <property type="nucleotide sequence ID" value="NC_001436.1"/>
</dbReference>
<dbReference type="PDB" id="1AO7">
    <property type="method" value="X-ray"/>
    <property type="resolution" value="2.60 A"/>
    <property type="chains" value="C=11-19"/>
</dbReference>
<dbReference type="PDB" id="1BD2">
    <property type="method" value="X-ray"/>
    <property type="resolution" value="2.50 A"/>
    <property type="chains" value="C=11-19"/>
</dbReference>
<dbReference type="PDB" id="1HHK">
    <property type="method" value="X-ray"/>
    <property type="resolution" value="2.50 A"/>
    <property type="chains" value="C/F=11-19"/>
</dbReference>
<dbReference type="PDB" id="1IM3">
    <property type="method" value="X-ray"/>
    <property type="resolution" value="2.20 A"/>
    <property type="chains" value="C/G/K/O=11-19"/>
</dbReference>
<dbReference type="PDB" id="2AV1">
    <property type="method" value="X-ray"/>
    <property type="resolution" value="1.95 A"/>
    <property type="chains" value="C/F=11-19"/>
</dbReference>
<dbReference type="PDB" id="2AV7">
    <property type="method" value="X-ray"/>
    <property type="resolution" value="2.05 A"/>
    <property type="chains" value="C/F=11-19"/>
</dbReference>
<dbReference type="PDB" id="5IRO">
    <property type="method" value="X-ray"/>
    <property type="resolution" value="2.64 A"/>
    <property type="chains" value="B/F/J/N/R/V=11-19"/>
</dbReference>
<dbReference type="PDB" id="6UZ1">
    <property type="method" value="X-ray"/>
    <property type="resolution" value="3.14 A"/>
    <property type="chains" value="C/H=11-19"/>
</dbReference>
<dbReference type="PDB" id="7QRS">
    <property type="method" value="X-ray"/>
    <property type="resolution" value="1.77 A"/>
    <property type="chains" value="C/D=346-353"/>
</dbReference>
<dbReference type="PDB" id="7QRT">
    <property type="method" value="X-ray"/>
    <property type="resolution" value="1.90 A"/>
    <property type="chains" value="C=346-353"/>
</dbReference>
<dbReference type="PDB" id="7QS8">
    <property type="method" value="X-ray"/>
    <property type="resolution" value="1.85 A"/>
    <property type="chains" value="C/D=346-353"/>
</dbReference>
<dbReference type="PDBsum" id="1AO7"/>
<dbReference type="PDBsum" id="1BD2"/>
<dbReference type="PDBsum" id="1HHK"/>
<dbReference type="PDBsum" id="1IM3"/>
<dbReference type="PDBsum" id="2AV1"/>
<dbReference type="PDBsum" id="2AV7"/>
<dbReference type="PDBsum" id="5IRO"/>
<dbReference type="PDBsum" id="6UZ1"/>
<dbReference type="PDBsum" id="7QRS"/>
<dbReference type="PDBsum" id="7QRT"/>
<dbReference type="PDBsum" id="7QS8"/>
<dbReference type="SMR" id="P14079"/>
<dbReference type="IntAct" id="P14079">
    <property type="interactions" value="56"/>
</dbReference>
<dbReference type="MINT" id="P14079"/>
<dbReference type="GeneID" id="1491938"/>
<dbReference type="KEGG" id="vg:1491938"/>
<dbReference type="EvolutionaryTrace" id="P14079"/>
<dbReference type="Proteomes" id="UP000001061">
    <property type="component" value="Segment"/>
</dbReference>
<dbReference type="Proteomes" id="UP000110593">
    <property type="component" value="Genome"/>
</dbReference>
<dbReference type="GO" id="GO:0030430">
    <property type="term" value="C:host cell cytoplasm"/>
    <property type="evidence" value="ECO:0000314"/>
    <property type="project" value="UniProtKB"/>
</dbReference>
<dbReference type="GO" id="GO:0042025">
    <property type="term" value="C:host cell nucleus"/>
    <property type="evidence" value="ECO:0000314"/>
    <property type="project" value="UniProtKB"/>
</dbReference>
<dbReference type="GO" id="GO:0003677">
    <property type="term" value="F:DNA binding"/>
    <property type="evidence" value="ECO:0007669"/>
    <property type="project" value="UniProtKB-KW"/>
</dbReference>
<dbReference type="GO" id="GO:0017124">
    <property type="term" value="F:SH3 domain binding"/>
    <property type="evidence" value="ECO:0007669"/>
    <property type="project" value="UniProtKB-KW"/>
</dbReference>
<dbReference type="GO" id="GO:0008270">
    <property type="term" value="F:zinc ion binding"/>
    <property type="evidence" value="ECO:0007669"/>
    <property type="project" value="UniProtKB-KW"/>
</dbReference>
<dbReference type="GO" id="GO:0071222">
    <property type="term" value="P:cellular response to lipopolysaccharide"/>
    <property type="evidence" value="ECO:0000315"/>
    <property type="project" value="UniProtKB"/>
</dbReference>
<dbReference type="GO" id="GO:0010629">
    <property type="term" value="P:negative regulation of gene expression"/>
    <property type="evidence" value="ECO:0000315"/>
    <property type="project" value="UniProtKB"/>
</dbReference>
<dbReference type="GO" id="GO:0045893">
    <property type="term" value="P:positive regulation of DNA-templated transcription"/>
    <property type="evidence" value="ECO:0007669"/>
    <property type="project" value="InterPro"/>
</dbReference>
<dbReference type="GO" id="GO:0043488">
    <property type="term" value="P:regulation of mRNA stability"/>
    <property type="evidence" value="ECO:0000315"/>
    <property type="project" value="UniProtKB"/>
</dbReference>
<dbReference type="GO" id="GO:0085033">
    <property type="term" value="P:symbiont-mediated activation of host NF-kappaB cascade"/>
    <property type="evidence" value="ECO:0007669"/>
    <property type="project" value="UniProtKB-KW"/>
</dbReference>
<dbReference type="GO" id="GO:0039646">
    <property type="term" value="P:symbiont-mediated perturbation of host cell cycle G0/G1 transition checkpoint"/>
    <property type="evidence" value="ECO:0007669"/>
    <property type="project" value="UniProtKB-KW"/>
</dbReference>
<dbReference type="GO" id="GO:0039645">
    <property type="term" value="P:symbiont-mediated perturbation of host cell cycle G1/S transition checkpoint"/>
    <property type="evidence" value="ECO:0007669"/>
    <property type="project" value="UniProtKB-KW"/>
</dbReference>
<dbReference type="GO" id="GO:0039593">
    <property type="term" value="P:symbiont-mediated perturbation of host exit from mitosis"/>
    <property type="evidence" value="ECO:0007669"/>
    <property type="project" value="UniProtKB-KW"/>
</dbReference>
<dbReference type="InterPro" id="IPR004120">
    <property type="entry name" value="Tax"/>
</dbReference>
<dbReference type="Pfam" id="PF02959">
    <property type="entry name" value="Tax"/>
    <property type="match status" value="1"/>
</dbReference>
<reference key="1">
    <citation type="journal article" date="1988" name="J. Gen. Virol.">
        <title>Molecular cloning and complete nucleotide sequence of an adult T cell leukaemia virus/human T cell leukaemia virus type I (ATLV/HTLV-I) isolate of Caribbean origin: relationship to other members of the ATLV/HTLV-I subgroup.</title>
        <authorList>
            <person name="Malik K.T.A."/>
            <person name="Even J."/>
            <person name="Karpas A."/>
        </authorList>
    </citation>
    <scope>NUCLEOTIDE SEQUENCE [GENOMIC DNA]</scope>
</reference>
<reference key="2">
    <citation type="submission" date="1997-11" db="EMBL/GenBank/DDBJ databases">
        <authorList>
            <person name="Chappey C."/>
        </authorList>
    </citation>
    <scope>NUCLEOTIDE SEQUENCE [GENOMIC DNA]</scope>
</reference>
<reference key="3">
    <citation type="journal article" date="2005" name="Oncogene">
        <title>Molecular mechanisms of cellular transformation by HTLV-1 Tax.</title>
        <authorList>
            <person name="Grassmann R."/>
            <person name="Aboud M."/>
            <person name="Jeang K.T."/>
        </authorList>
    </citation>
    <scope>REVIEW</scope>
</reference>
<reference key="4">
    <citation type="journal article" date="2003" name="J. Natl. Cancer Inst.">
        <title>Interaction of retroviral Tax oncoproteins with tristetraprolin and regulation of tumor necrosis factor-alpha expression.</title>
        <authorList>
            <person name="Twizere J.-C."/>
            <person name="Kruys V."/>
            <person name="Lefebvre L."/>
            <person name="Vanderplasschen A."/>
            <person name="Collete D."/>
            <person name="Debacq C."/>
            <person name="Lai W.S."/>
            <person name="Jauniaux J.-C."/>
            <person name="Bernstein L.R."/>
            <person name="Semmes J.O."/>
            <person name="Burny A."/>
            <person name="Blackshear P.J."/>
            <person name="Kettmann R."/>
            <person name="Willems L."/>
        </authorList>
    </citation>
    <scope>INTERACTION WITH ZFP36</scope>
    <scope>SUBCELLULAR LOCATION</scope>
</reference>
<reference key="5">
    <citation type="journal article" date="2005" name="Oncogene">
        <title>Transcriptional and post-transcriptional gene regulation of HTLV-1.</title>
        <authorList>
            <person name="Kashanchi F."/>
            <person name="Brady J.N."/>
        </authorList>
    </citation>
    <scope>REVIEW</scope>
</reference>
<reference key="6">
    <citation type="journal article" date="1996" name="J. Immunol.">
        <title>Assembly, specific binding, and crystallization of a human TCR-alphabeta with an antigenic Tax peptide from human T lymphotropic virus type 1 and the class I MHC molecule HLA-A2.</title>
        <authorList>
            <person name="Garboczi D.N."/>
            <person name="Utz U."/>
            <person name="Ghosh P."/>
            <person name="Seth A."/>
            <person name="Kim J."/>
            <person name="VanTienhoven E.A."/>
            <person name="Biddison W.E."/>
            <person name="Wiley D.C."/>
        </authorList>
    </citation>
    <scope>X-RAY CRYSTALLOGRAPHY (2.6 ANGSTROMS) OF 16-24</scope>
</reference>
<proteinExistence type="evidence at protein level"/>
<organismHost>
    <name type="scientific">Homo sapiens</name>
    <name type="common">Human</name>
    <dbReference type="NCBI Taxonomy" id="9606"/>
</organismHost>
<accession>P14079</accession>
<accession>O56231</accession>
<protein>
    <recommendedName>
        <fullName>Protein Tax-1</fullName>
    </recommendedName>
    <alternativeName>
        <fullName>Protein X-LOR</fullName>
        <shortName>Protein PX</shortName>
    </alternativeName>
    <alternativeName>
        <fullName>Trans-activating transcriptional regulatory protein of HTLV-1</fullName>
    </alternativeName>
</protein>
<name>TAX_HTL1C</name>
<feature type="chain" id="PRO_0000085495" description="Protein Tax-1">
    <location>
        <begin position="1"/>
        <end position="353"/>
    </location>
</feature>
<feature type="zinc finger region" evidence="3">
    <location>
        <begin position="23"/>
        <end position="49"/>
    </location>
</feature>
<feature type="region of interest" description="Interaction with CREB1" evidence="1">
    <location>
        <begin position="2"/>
        <end position="58"/>
    </location>
</feature>
<feature type="region of interest" description="Interaction with CREBBP/P300" evidence="1">
    <location>
        <begin position="81"/>
        <end position="95"/>
    </location>
</feature>
<feature type="region of interest" description="Interaction with IKBKG" evidence="1">
    <location>
        <begin position="106"/>
        <end position="111"/>
    </location>
</feature>
<feature type="region of interest" description="Homodimerization" evidence="1">
    <location>
        <begin position="116"/>
        <end position="145"/>
    </location>
</feature>
<feature type="region of interest" description="Homodimerization" evidence="1">
    <location>
        <begin position="213"/>
        <end position="248"/>
    </location>
</feature>
<feature type="region of interest" description="Transactivation" evidence="1">
    <location>
        <begin position="289"/>
        <end position="322"/>
    </location>
</feature>
<feature type="region of interest" description="Interaction with CREBBP C-terminus" evidence="1">
    <location>
        <begin position="312"/>
        <end position="319"/>
    </location>
</feature>
<feature type="region of interest" description="Disordered" evidence="4">
    <location>
        <begin position="326"/>
        <end position="353"/>
    </location>
</feature>
<feature type="short sequence motif" description="SH3-binding" evidence="3">
    <location>
        <begin position="73"/>
        <end position="80"/>
    </location>
</feature>
<feature type="short sequence motif" description="Nuclear export signal" evidence="1">
    <location>
        <begin position="188"/>
        <end position="202"/>
    </location>
</feature>
<feature type="short sequence motif" description="PDZ-binding" evidence="1">
    <location>
        <begin position="350"/>
        <end position="353"/>
    </location>
</feature>
<feature type="compositionally biased region" description="Basic and acidic residues" evidence="4">
    <location>
        <begin position="343"/>
        <end position="353"/>
    </location>
</feature>
<feature type="modified residue" description="Phosphothreonine; by host" evidence="1">
    <location>
        <position position="48"/>
    </location>
</feature>
<feature type="modified residue" description="Phosphothreonine; by host" evidence="1">
    <location>
        <position position="184"/>
    </location>
</feature>
<feature type="modified residue" description="Phosphothreonine; by host" evidence="1">
    <location>
        <position position="215"/>
    </location>
</feature>
<feature type="modified residue" description="Phosphoserine; by host" evidence="1">
    <location>
        <position position="300"/>
    </location>
</feature>
<feature type="modified residue" description="Phosphoserine; by host" evidence="1">
    <location>
        <position position="301"/>
    </location>
</feature>
<feature type="modified residue" description="Phosphoserine; by host" evidence="1">
    <location>
        <position position="336"/>
    </location>
</feature>
<feature type="strand" evidence="7">
    <location>
        <begin position="350"/>
        <end position="353"/>
    </location>
</feature>
<gene>
    <name type="primary">tax</name>
</gene>
<comment type="function">
    <text evidence="2">Transcriptional activator that governs the viral transcription from the 5'LTR via the recruitment of dimers of host phosphorylated CREB1. Together they bind cAMP response elements within the viral promoter and mediate high-level viral transcription. Increases host CREB1 O-GlcNAcylation to further increase 5'LTR transactivation. Also modulates the expression of cellular genes leading to the deregulation of T-cell proliferation, perturbing the integrity of cell cycle checkpoints, the DNA damage response and apopototic pathways. Acts as an ubiquitin E3 ligase and stimulates host IKK complex by catalyzing the assembly of free mixed-linkage polyubiquitin chains, resulting in constitutive activation of the transcription factor NF-kappa-B. Inhibits the host nonsense-mediated mRNA decay (NMD), a cellular process that can actively degrade mRNAs by interacting with host UPF1.</text>
</comment>
<comment type="subunit">
    <text evidence="2 5">Homodimer. Interacts with host CREB1. Interacts with host DLG1, IKBKG, KDM4A, MAGII3 and TAX1BP1. Recruits the coactivators CREBBP, EP300 and PCAF. Interaction with human CARM1 enhances Tax transactivation and promotes methylation of histone H3. Interacts with host SUV39H1 protein, leading to abrogate Tax transactivation of HTLV-1 LTR. Interaction with human CREB coactivators, CRTC1/TORC1, CRTC2/TORC2 and CRTC3/TORC3 enhances Tax transactivation. Interacts with host UPF1; this interaction inhibits the host nonsense-mediated mRNA decay (NMD). Interacts (via N-terminus) with host PLSCR1; this interaction negatively regulates Tax transactivation activity by altering its subcellular distribution and homodimerization (By similarity). Interacts (via C-terminus) with host ZFP36 (via C-terminus); this interaction inhibits Tax to transactivate viral long terminal repeat (LTR) promoter (PubMed:14679154).</text>
</comment>
<comment type="interaction">
    <interactant intactId="EBI-9675698">
        <id>P14079</id>
    </interactant>
    <interactant intactId="EBI-719994">
        <id>Q53HC0</id>
        <label>CCDC92</label>
    </interactant>
    <organismsDiffer>true</organismsDiffer>
    <experiments>3</experiments>
</comment>
<comment type="interaction">
    <interactant intactId="EBI-9675698">
        <id>P14079</id>
    </interactant>
    <interactant intactId="EBI-741977">
        <id>Q96MT8</id>
        <label>CEP63</label>
    </interactant>
    <organismsDiffer>true</organismsDiffer>
    <experiments>5</experiments>
</comment>
<comment type="interaction">
    <interactant intactId="EBI-9675698">
        <id>P14079</id>
    </interactant>
    <interactant intactId="EBI-520375">
        <id>P78560</id>
        <label>CRADD</label>
    </interactant>
    <organismsDiffer>true</organismsDiffer>
    <experiments>3</experiments>
</comment>
<comment type="interaction">
    <interactant intactId="EBI-9675698">
        <id>P14079</id>
    </interactant>
    <interactant intactId="EBI-2802973">
        <id>O14595</id>
        <label>CTDSP2</label>
    </interactant>
    <organismsDiffer>true</organismsDiffer>
    <experiments>3</experiments>
</comment>
<comment type="interaction">
    <interactant intactId="EBI-9675698">
        <id>P14079</id>
    </interactant>
    <interactant intactId="EBI-742953">
        <id>Q9BY27</id>
        <label>DGCR6L</label>
    </interactant>
    <organismsDiffer>true</organismsDiffer>
    <experiments>3</experiments>
</comment>
<comment type="interaction">
    <interactant intactId="EBI-9675698">
        <id>P14079</id>
    </interactant>
    <interactant intactId="EBI-6447147">
        <id>P43268</id>
        <label>ETV4</label>
    </interactant>
    <organismsDiffer>true</organismsDiffer>
    <experiments>3</experiments>
</comment>
<comment type="interaction">
    <interactant intactId="EBI-9675698">
        <id>P14079</id>
    </interactant>
    <interactant intactId="EBI-81610">
        <id>O15287</id>
        <label>FANCG</label>
    </interactant>
    <organismsDiffer>true</organismsDiffer>
    <experiments>3</experiments>
</comment>
<comment type="interaction">
    <interactant intactId="EBI-9675698">
        <id>P14079</id>
    </interactant>
    <interactant intactId="EBI-743099">
        <id>Q969F0</id>
        <label>FATE1</label>
    </interactant>
    <organismsDiffer>true</organismsDiffer>
    <experiments>3</experiments>
</comment>
<comment type="interaction">
    <interactant intactId="EBI-9675698">
        <id>P14079</id>
    </interactant>
    <interactant intactId="EBI-9675710">
        <id>Q5T8I9</id>
        <label>HENMT1</label>
    </interactant>
    <organismsDiffer>true</organismsDiffer>
    <experiments>3</experiments>
</comment>
<comment type="interaction">
    <interactant intactId="EBI-9675698">
        <id>P14079</id>
    </interactant>
    <interactant intactId="EBI-740220">
        <id>O14964</id>
        <label>HGS</label>
    </interactant>
    <organismsDiffer>true</organismsDiffer>
    <experiments>4</experiments>
</comment>
<comment type="interaction">
    <interactant intactId="EBI-9675698">
        <id>P14079</id>
    </interactant>
    <interactant intactId="EBI-739566">
        <id>P19012</id>
        <label>KRT15</label>
    </interactant>
    <organismsDiffer>true</organismsDiffer>
    <experiments>3</experiments>
</comment>
<comment type="interaction">
    <interactant intactId="EBI-9675698">
        <id>P14079</id>
    </interactant>
    <interactant intactId="EBI-2371606">
        <id>P19013</id>
        <label>KRT4</label>
    </interactant>
    <organismsDiffer>true</organismsDiffer>
    <experiments>3</experiments>
</comment>
<comment type="interaction">
    <interactant intactId="EBI-9675698">
        <id>P14079</id>
    </interactant>
    <interactant intactId="EBI-297852">
        <id>P05787</id>
        <label>KRT8</label>
    </interactant>
    <organismsDiffer>true</organismsDiffer>
    <experiments>3</experiments>
</comment>
<comment type="interaction">
    <interactant intactId="EBI-9675698">
        <id>P14079</id>
    </interactant>
    <interactant intactId="EBI-2340947">
        <id>Q8N448</id>
        <label>LNX2</label>
    </interactant>
    <organismsDiffer>true</organismsDiffer>
    <experiments>4</experiments>
</comment>
<comment type="interaction">
    <interactant intactId="EBI-9675698">
        <id>P14079</id>
    </interactant>
    <interactant intactId="EBI-716172">
        <id>P82932</id>
        <label>MRPS6</label>
    </interactant>
    <organismsDiffer>true</organismsDiffer>
    <experiments>3</experiments>
</comment>
<comment type="interaction">
    <interactant intactId="EBI-9675698">
        <id>P14079</id>
    </interactant>
    <interactant intactId="EBI-475646">
        <id>P07196</id>
        <label>NEFL</label>
    </interactant>
    <organismsDiffer>true</organismsDiffer>
    <experiments>4</experiments>
</comment>
<comment type="interaction">
    <interactant intactId="EBI-9675698">
        <id>P14079</id>
    </interactant>
    <interactant intactId="EBI-740897">
        <id>Q9GZT8</id>
        <label>NIF3L1</label>
    </interactant>
    <organismsDiffer>true</organismsDiffer>
    <experiments>3</experiments>
</comment>
<comment type="interaction">
    <interactant intactId="EBI-9675698">
        <id>P14079</id>
    </interactant>
    <interactant intactId="EBI-1391623">
        <id>P29474</id>
        <label>NOS3</label>
    </interactant>
    <organismsDiffer>true</organismsDiffer>
    <experiments>3</experiments>
</comment>
<comment type="interaction">
    <interactant intactId="EBI-9675698">
        <id>P14079</id>
    </interactant>
    <interactant intactId="EBI-740486">
        <id>Q6ZVK8</id>
        <label>NUDT18</label>
    </interactant>
    <organismsDiffer>true</organismsDiffer>
    <experiments>5</experiments>
</comment>
<comment type="interaction">
    <interactant intactId="EBI-9675698">
        <id>P14079</id>
    </interactant>
    <interactant intactId="EBI-9675790">
        <id>Q9NP87</id>
        <label>POLM</label>
    </interactant>
    <organismsDiffer>true</organismsDiffer>
    <experiments>3</experiments>
</comment>
<comment type="interaction">
    <interactant intactId="EBI-9675698">
        <id>P14079</id>
    </interactant>
    <interactant intactId="EBI-366525">
        <id>Q969H6</id>
        <label>POP5</label>
    </interactant>
    <organismsDiffer>true</organismsDiffer>
    <experiments>3</experiments>
</comment>
<comment type="interaction">
    <interactant intactId="EBI-9675698">
        <id>P14079</id>
    </interactant>
    <interactant intactId="EBI-9675925">
        <id>Q33E94</id>
        <label>RFX4</label>
    </interactant>
    <organismsDiffer>true</organismsDiffer>
    <experiments>3</experiments>
</comment>
<comment type="interaction">
    <interactant intactId="EBI-9675698">
        <id>P14079</id>
    </interactant>
    <interactant intactId="EBI-2823702">
        <id>Q92546</id>
        <label>RGP1</label>
    </interactant>
    <organismsDiffer>true</organismsDiffer>
    <experiments>3</experiments>
</comment>
<comment type="interaction">
    <interactant intactId="EBI-9675698">
        <id>P14079</id>
    </interactant>
    <interactant intactId="EBI-740128">
        <id>Q9H4K1</id>
        <label>RIBC2</label>
    </interactant>
    <organismsDiffer>true</organismsDiffer>
    <experiments>3</experiments>
</comment>
<comment type="interaction">
    <interactant intactId="EBI-9675698">
        <id>P14079</id>
    </interactant>
    <interactant intactId="EBI-8656864">
        <id>Q6PF05</id>
        <label>TTC23L</label>
    </interactant>
    <organismsDiffer>true</organismsDiffer>
    <experiments>3</experiments>
</comment>
<comment type="interaction">
    <interactant intactId="EBI-9675698">
        <id>P14079</id>
    </interactant>
    <interactant intactId="EBI-1569256">
        <id>Q8IZQ1</id>
        <label>WDFY3</label>
    </interactant>
    <organismsDiffer>true</organismsDiffer>
    <experiments>3</experiments>
</comment>
<comment type="interaction">
    <interactant intactId="EBI-9675698">
        <id>P14079</id>
    </interactant>
    <interactant intactId="EBI-9675993">
        <id>Q8N883</id>
        <label>ZNF614</label>
    </interactant>
    <organismsDiffer>true</organismsDiffer>
    <experiments>3</experiments>
</comment>
<comment type="subcellular location">
    <subcellularLocation>
        <location evidence="5">Host nucleus</location>
    </subcellularLocation>
    <subcellularLocation>
        <location evidence="5">Host cytoplasm</location>
    </subcellularLocation>
    <text evidence="2">Shuttles from the host nucleus to the cytoplasm. Found predominantly in the nucleus, where it is equally distributed between the nucleoplasm and the nuclear matrix.</text>
</comment>
<comment type="induction">
    <text>Down-regulated by P30II.</text>
</comment>
<comment type="domain">
    <text evidence="1">The 48 N-terminal residues contain a non-canonical functional nuclear localization signal (NLS).</text>
</comment>
<comment type="domain">
    <text evidence="1">The PDZ-binding domain mediates binding to human DLG1 and MAGI3. Interaction with other PDZ domain-containing protein induces IL2-independent growth (By similarity).</text>
</comment>
<comment type="PTM">
    <text evidence="1">Phosphorylation at Thr-48 results in the loss of NF-kappa-B activation function. Phosphorylation at Thr-215 results in loss of CREB and NF-B responsive promoters activation. Phosphorylation at Thr-184 and Ser-336 have no effect on these Tax functions. Phosphorylation of either Ser-300 or Ser-301 is necessary for localization to nuclear bodies. Thr-48, Thr-184, Thr-215 and Ser-336 are highly phosphorylated, whereas Ser-300 or Ser-301 are only rarely phosphorylated (By similarity).</text>
</comment>
<comment type="miscellaneous">
    <text>HTLV-1 lineages are divided in four clades, A (Cosmopolitan), B (Central African group), C (Melanesian group) and D (New Central African group).</text>
</comment>
<comment type="similarity">
    <text evidence="6">Belongs to the deltaretrovirus Tax protein family.</text>
</comment>
<keyword id="KW-0002">3D-structure</keyword>
<keyword id="KW-1074">Activation of host NF-kappa-B by virus</keyword>
<keyword id="KW-0010">Activator</keyword>
<keyword id="KW-0238">DNA-binding</keyword>
<keyword id="KW-1077">G0/G1 host cell cycle checkpoint dysregulation by virus</keyword>
<keyword id="KW-1078">G1/S host cell cycle checkpoint dysregulation by virus</keyword>
<keyword id="KW-1035">Host cytoplasm</keyword>
<keyword id="KW-1048">Host nucleus</keyword>
<keyword id="KW-0945">Host-virus interaction</keyword>
<keyword id="KW-1098">Inhibition of host mitotic exit by virus</keyword>
<keyword id="KW-0479">Metal-binding</keyword>
<keyword id="KW-1121">Modulation of host cell cycle by virus</keyword>
<keyword id="KW-0553">Oncogene</keyword>
<keyword id="KW-0597">Phosphoprotein</keyword>
<keyword id="KW-1185">Reference proteome</keyword>
<keyword id="KW-0729">SH3-binding</keyword>
<keyword id="KW-0804">Transcription</keyword>
<keyword id="KW-0805">Transcription regulation</keyword>
<keyword id="KW-0862">Zinc</keyword>
<keyword id="KW-0863">Zinc-finger</keyword>
<sequence>MAHFPGFGQSLLFGYPVYVFGDCVQGDWCPISGGLCSARLHRHALLATCPEHQITWDPIDGRVIGSALQFLIPRLPSFPTQRTSKTLKVLTPPITHTTPNIPPSFLQAMRKYSPFRNGYMEPTLGQHLPTLSFPDPGLRPQNLYTLWGGSVVCMYLYQLSPPITWPLLPHVIFCHPGQLGAFLTNVPYKRIEKLLYKISLTTGALIILPEDCLPTTLFQPARAPVTLTAWQNGLLPFHSTLTTPGLIWTFTDGTPMISGPCPKDGQPSLVLQSSSFIFHKFQTKAYHPSFLLSHGLIQYSSFHNLHLLFEEYTNIPISLLFNEKEADDNDHEPQISPGGLEPLSEKHFRETEV</sequence>
<evidence type="ECO:0000250" key="1"/>
<evidence type="ECO:0000250" key="2">
    <source>
        <dbReference type="UniProtKB" id="P03409"/>
    </source>
</evidence>
<evidence type="ECO:0000255" key="3"/>
<evidence type="ECO:0000256" key="4">
    <source>
        <dbReference type="SAM" id="MobiDB-lite"/>
    </source>
</evidence>
<evidence type="ECO:0000269" key="5">
    <source>
    </source>
</evidence>
<evidence type="ECO:0000305" key="6"/>
<evidence type="ECO:0007829" key="7">
    <source>
        <dbReference type="PDB" id="7QRS"/>
    </source>
</evidence>
<organism>
    <name type="scientific">Human T-cell leukemia virus 1 (isolate Caribbea HS-35 subtype A)</name>
    <name type="common">HTLV-1</name>
    <dbReference type="NCBI Taxonomy" id="11927"/>
    <lineage>
        <taxon>Viruses</taxon>
        <taxon>Riboviria</taxon>
        <taxon>Pararnavirae</taxon>
        <taxon>Artverviricota</taxon>
        <taxon>Revtraviricetes</taxon>
        <taxon>Ortervirales</taxon>
        <taxon>Retroviridae</taxon>
        <taxon>Orthoretrovirinae</taxon>
        <taxon>Deltaretrovirus</taxon>
        <taxon>Primate T-lymphotropic virus 1</taxon>
    </lineage>
</organism>